<proteinExistence type="inferred from homology"/>
<gene>
    <name type="primary">pepA</name>
    <name type="synonym">lap</name>
    <name type="ordered locus">sll2001</name>
</gene>
<sequence length="492" mass="52166">MQIRGTDYTALTWQGDALALGFFENATEITGDLTQLDDRLEGVLRELIEEKEFKGKAGQKLVSRVGSKTPIKKLILVGLGEIEKFNSQVLGDGAAAIARLAKGEKVKTLGVSLPQREHDPAQTAAILTEGILLALHQDNRFKSDPEDKEIKLTTVELLGLGEQSTAIGKAEKIVSGVILAREMVAAPANEVTPLTFTEIATELAQTYGLELEVLGQTECEALGMGAFLGVAKASELPPQFIHLTYRPANPVKKLAIIGKSLTFDSGGLNIKGAGSGIETMKMDMGGGGATLGAAKAIAQLKPNVEIHFICAATENMISGTAMHPGDILTASNGKTIEVNNTDAEGRLTLADALVFAEKLGVEAIVDLATLTGACIVALGDDIGGLWSPNQELADELKVAADKAGEKFWQMPMESKYFEGLKSPIADMKNTGPRSGGSITAALFLQQFIKETPWAHLDIAGPVWTDKQNGVHNAGATGYPVRTLVQWVLGLAE</sequence>
<evidence type="ECO:0000250" key="1"/>
<evidence type="ECO:0000255" key="2"/>
<evidence type="ECO:0000305" key="3"/>
<comment type="function">
    <text evidence="1">Presumably involved in the processing and regular turnover of intracellular proteins. Catalyzes the removal of unsubstituted N-terminal amino acids from various peptides (By similarity).</text>
</comment>
<comment type="catalytic activity">
    <reaction>
        <text>Release of an N-terminal amino acid, Xaa-|-Yaa-, in which Xaa is preferably Leu, but may be other amino acids including Pro although not Arg or Lys, and Yaa may be Pro. Amino acid amides and methyl esters are also readily hydrolyzed, but rates on arylamides are exceedingly low.</text>
        <dbReference type="EC" id="3.4.11.1"/>
    </reaction>
</comment>
<comment type="catalytic activity">
    <reaction>
        <text>Release of an N-terminal amino acid, preferentially leucine, but not glutamic or aspartic acids.</text>
        <dbReference type="EC" id="3.4.11.10"/>
    </reaction>
</comment>
<comment type="cofactor">
    <cofactor evidence="1">
        <name>Mn(2+)</name>
        <dbReference type="ChEBI" id="CHEBI:29035"/>
    </cofactor>
    <text evidence="1">Binds 2 manganese ions per subunit.</text>
</comment>
<comment type="subcellular location">
    <subcellularLocation>
        <location evidence="1">Cytoplasm</location>
    </subcellularLocation>
</comment>
<comment type="similarity">
    <text evidence="3">Belongs to the peptidase M17 family.</text>
</comment>
<comment type="sequence caution" evidence="3">
    <conflict type="erroneous initiation">
        <sequence resource="EMBL-CDS" id="BAA18039"/>
    </conflict>
</comment>
<protein>
    <recommendedName>
        <fullName>Probable cytosol aminopeptidase</fullName>
        <ecNumber>3.4.11.1</ecNumber>
    </recommendedName>
    <alternativeName>
        <fullName>Leucine aminopeptidase</fullName>
        <shortName>LAP</shortName>
        <ecNumber>3.4.11.10</ecNumber>
    </alternativeName>
    <alternativeName>
        <fullName>Leucyl aminopeptidase</fullName>
    </alternativeName>
</protein>
<accession>P73971</accession>
<name>AMPA_SYNY3</name>
<dbReference type="EC" id="3.4.11.1"/>
<dbReference type="EC" id="3.4.11.10"/>
<dbReference type="EMBL" id="BA000022">
    <property type="protein sequence ID" value="BAA18039.1"/>
    <property type="status" value="ALT_INIT"/>
    <property type="molecule type" value="Genomic_DNA"/>
</dbReference>
<dbReference type="PIR" id="S75478">
    <property type="entry name" value="S75478"/>
</dbReference>
<dbReference type="SMR" id="P73971"/>
<dbReference type="FunCoup" id="P73971">
    <property type="interactions" value="305"/>
</dbReference>
<dbReference type="IntAct" id="P73971">
    <property type="interactions" value="2"/>
</dbReference>
<dbReference type="STRING" id="1148.gene:10498909"/>
<dbReference type="PaxDb" id="1148-1653123"/>
<dbReference type="EnsemblBacteria" id="BAA18039">
    <property type="protein sequence ID" value="BAA18039"/>
    <property type="gene ID" value="BAA18039"/>
</dbReference>
<dbReference type="KEGG" id="syn:sll2001"/>
<dbReference type="eggNOG" id="COG0260">
    <property type="taxonomic scope" value="Bacteria"/>
</dbReference>
<dbReference type="InParanoid" id="P73971"/>
<dbReference type="PhylomeDB" id="P73971"/>
<dbReference type="Proteomes" id="UP000001425">
    <property type="component" value="Chromosome"/>
</dbReference>
<dbReference type="GO" id="GO:0005737">
    <property type="term" value="C:cytoplasm"/>
    <property type="evidence" value="ECO:0000318"/>
    <property type="project" value="GO_Central"/>
</dbReference>
<dbReference type="GO" id="GO:0030145">
    <property type="term" value="F:manganese ion binding"/>
    <property type="evidence" value="ECO:0007669"/>
    <property type="project" value="UniProtKB-UniRule"/>
</dbReference>
<dbReference type="GO" id="GO:0070006">
    <property type="term" value="F:metalloaminopeptidase activity"/>
    <property type="evidence" value="ECO:0007669"/>
    <property type="project" value="InterPro"/>
</dbReference>
<dbReference type="GO" id="GO:0008233">
    <property type="term" value="F:peptidase activity"/>
    <property type="evidence" value="ECO:0000318"/>
    <property type="project" value="GO_Central"/>
</dbReference>
<dbReference type="GO" id="GO:0006508">
    <property type="term" value="P:proteolysis"/>
    <property type="evidence" value="ECO:0000318"/>
    <property type="project" value="GO_Central"/>
</dbReference>
<dbReference type="CDD" id="cd00433">
    <property type="entry name" value="Peptidase_M17"/>
    <property type="match status" value="1"/>
</dbReference>
<dbReference type="Gene3D" id="3.40.220.10">
    <property type="entry name" value="Leucine Aminopeptidase, subunit E, domain 1"/>
    <property type="match status" value="1"/>
</dbReference>
<dbReference type="Gene3D" id="3.40.630.10">
    <property type="entry name" value="Zn peptidases"/>
    <property type="match status" value="1"/>
</dbReference>
<dbReference type="HAMAP" id="MF_00181">
    <property type="entry name" value="Cytosol_peptidase_M17"/>
    <property type="match status" value="1"/>
</dbReference>
<dbReference type="InterPro" id="IPR011356">
    <property type="entry name" value="Leucine_aapep/pepB"/>
</dbReference>
<dbReference type="InterPro" id="IPR043472">
    <property type="entry name" value="Macro_dom-like"/>
</dbReference>
<dbReference type="InterPro" id="IPR000819">
    <property type="entry name" value="Peptidase_M17_C"/>
</dbReference>
<dbReference type="InterPro" id="IPR023042">
    <property type="entry name" value="Peptidase_M17_leu_NH2_pept"/>
</dbReference>
<dbReference type="InterPro" id="IPR008283">
    <property type="entry name" value="Peptidase_M17_N"/>
</dbReference>
<dbReference type="NCBIfam" id="NF002076">
    <property type="entry name" value="PRK00913.2-3"/>
    <property type="match status" value="1"/>
</dbReference>
<dbReference type="PANTHER" id="PTHR11963:SF23">
    <property type="entry name" value="CYTOSOL AMINOPEPTIDASE"/>
    <property type="match status" value="1"/>
</dbReference>
<dbReference type="PANTHER" id="PTHR11963">
    <property type="entry name" value="LEUCINE AMINOPEPTIDASE-RELATED"/>
    <property type="match status" value="1"/>
</dbReference>
<dbReference type="Pfam" id="PF00883">
    <property type="entry name" value="Peptidase_M17"/>
    <property type="match status" value="1"/>
</dbReference>
<dbReference type="Pfam" id="PF02789">
    <property type="entry name" value="Peptidase_M17_N"/>
    <property type="match status" value="1"/>
</dbReference>
<dbReference type="PRINTS" id="PR00481">
    <property type="entry name" value="LAMNOPPTDASE"/>
</dbReference>
<dbReference type="SUPFAM" id="SSF52949">
    <property type="entry name" value="Macro domain-like"/>
    <property type="match status" value="1"/>
</dbReference>
<dbReference type="SUPFAM" id="SSF53187">
    <property type="entry name" value="Zn-dependent exopeptidases"/>
    <property type="match status" value="1"/>
</dbReference>
<dbReference type="PROSITE" id="PS00631">
    <property type="entry name" value="CYTOSOL_AP"/>
    <property type="match status" value="1"/>
</dbReference>
<feature type="chain" id="PRO_0000165805" description="Probable cytosol aminopeptidase">
    <location>
        <begin position="1"/>
        <end position="492"/>
    </location>
</feature>
<feature type="active site" evidence="2">
    <location>
        <position position="271"/>
    </location>
</feature>
<feature type="active site" evidence="2">
    <location>
        <position position="346"/>
    </location>
</feature>
<feature type="binding site" evidence="1">
    <location>
        <position position="259"/>
    </location>
    <ligand>
        <name>Mn(2+)</name>
        <dbReference type="ChEBI" id="CHEBI:29035"/>
        <label>2</label>
    </ligand>
</feature>
<feature type="binding site" evidence="1">
    <location>
        <position position="264"/>
    </location>
    <ligand>
        <name>Mn(2+)</name>
        <dbReference type="ChEBI" id="CHEBI:29035"/>
        <label>1</label>
    </ligand>
</feature>
<feature type="binding site" evidence="1">
    <location>
        <position position="264"/>
    </location>
    <ligand>
        <name>Mn(2+)</name>
        <dbReference type="ChEBI" id="CHEBI:29035"/>
        <label>2</label>
    </ligand>
</feature>
<feature type="binding site" evidence="1">
    <location>
        <position position="283"/>
    </location>
    <ligand>
        <name>Mn(2+)</name>
        <dbReference type="ChEBI" id="CHEBI:29035"/>
        <label>2</label>
    </ligand>
</feature>
<feature type="binding site" evidence="1">
    <location>
        <position position="342"/>
    </location>
    <ligand>
        <name>Mn(2+)</name>
        <dbReference type="ChEBI" id="CHEBI:29035"/>
        <label>1</label>
    </ligand>
</feature>
<feature type="binding site" evidence="1">
    <location>
        <position position="344"/>
    </location>
    <ligand>
        <name>Mn(2+)</name>
        <dbReference type="ChEBI" id="CHEBI:29035"/>
        <label>1</label>
    </ligand>
</feature>
<feature type="binding site" evidence="1">
    <location>
        <position position="344"/>
    </location>
    <ligand>
        <name>Mn(2+)</name>
        <dbReference type="ChEBI" id="CHEBI:29035"/>
        <label>2</label>
    </ligand>
</feature>
<organism>
    <name type="scientific">Synechocystis sp. (strain ATCC 27184 / PCC 6803 / Kazusa)</name>
    <dbReference type="NCBI Taxonomy" id="1111708"/>
    <lineage>
        <taxon>Bacteria</taxon>
        <taxon>Bacillati</taxon>
        <taxon>Cyanobacteriota</taxon>
        <taxon>Cyanophyceae</taxon>
        <taxon>Synechococcales</taxon>
        <taxon>Merismopediaceae</taxon>
        <taxon>Synechocystis</taxon>
    </lineage>
</organism>
<keyword id="KW-0031">Aminopeptidase</keyword>
<keyword id="KW-0963">Cytoplasm</keyword>
<keyword id="KW-0378">Hydrolase</keyword>
<keyword id="KW-0464">Manganese</keyword>
<keyword id="KW-0479">Metal-binding</keyword>
<keyword id="KW-0645">Protease</keyword>
<keyword id="KW-1185">Reference proteome</keyword>
<reference key="1">
    <citation type="journal article" date="1996" name="DNA Res.">
        <title>Sequence analysis of the genome of the unicellular cyanobacterium Synechocystis sp. strain PCC6803. II. Sequence determination of the entire genome and assignment of potential protein-coding regions.</title>
        <authorList>
            <person name="Kaneko T."/>
            <person name="Sato S."/>
            <person name="Kotani H."/>
            <person name="Tanaka A."/>
            <person name="Asamizu E."/>
            <person name="Nakamura Y."/>
            <person name="Miyajima N."/>
            <person name="Hirosawa M."/>
            <person name="Sugiura M."/>
            <person name="Sasamoto S."/>
            <person name="Kimura T."/>
            <person name="Hosouchi T."/>
            <person name="Matsuno A."/>
            <person name="Muraki A."/>
            <person name="Nakazaki N."/>
            <person name="Naruo K."/>
            <person name="Okumura S."/>
            <person name="Shimpo S."/>
            <person name="Takeuchi C."/>
            <person name="Wada T."/>
            <person name="Watanabe A."/>
            <person name="Yamada M."/>
            <person name="Yasuda M."/>
            <person name="Tabata S."/>
        </authorList>
    </citation>
    <scope>NUCLEOTIDE SEQUENCE [LARGE SCALE GENOMIC DNA]</scope>
    <source>
        <strain>ATCC 27184 / PCC 6803 / Kazusa</strain>
    </source>
</reference>